<proteinExistence type="inferred from homology"/>
<name>PROB_LARHH</name>
<feature type="chain" id="PRO_1000193697" description="Glutamate 5-kinase">
    <location>
        <begin position="1"/>
        <end position="372"/>
    </location>
</feature>
<feature type="domain" description="PUA" evidence="1">
    <location>
        <begin position="280"/>
        <end position="358"/>
    </location>
</feature>
<feature type="binding site" evidence="1">
    <location>
        <position position="14"/>
    </location>
    <ligand>
        <name>ATP</name>
        <dbReference type="ChEBI" id="CHEBI:30616"/>
    </ligand>
</feature>
<feature type="binding site" evidence="1">
    <location>
        <position position="54"/>
    </location>
    <ligand>
        <name>substrate</name>
    </ligand>
</feature>
<feature type="binding site" evidence="1">
    <location>
        <position position="141"/>
    </location>
    <ligand>
        <name>substrate</name>
    </ligand>
</feature>
<feature type="binding site" evidence="1">
    <location>
        <position position="153"/>
    </location>
    <ligand>
        <name>substrate</name>
    </ligand>
</feature>
<feature type="binding site" evidence="1">
    <location>
        <begin position="173"/>
        <end position="174"/>
    </location>
    <ligand>
        <name>ATP</name>
        <dbReference type="ChEBI" id="CHEBI:30616"/>
    </ligand>
</feature>
<feature type="binding site" evidence="1">
    <location>
        <begin position="215"/>
        <end position="221"/>
    </location>
    <ligand>
        <name>ATP</name>
        <dbReference type="ChEBI" id="CHEBI:30616"/>
    </ligand>
</feature>
<reference key="1">
    <citation type="journal article" date="2009" name="PLoS Genet.">
        <title>The complete genome and proteome of Laribacter hongkongensis reveal potential mechanisms for adaptations to different temperatures and habitats.</title>
        <authorList>
            <person name="Woo P.C.Y."/>
            <person name="Lau S.K.P."/>
            <person name="Tse H."/>
            <person name="Teng J.L.L."/>
            <person name="Curreem S.O."/>
            <person name="Tsang A.K.L."/>
            <person name="Fan R.Y.Y."/>
            <person name="Wong G.K.M."/>
            <person name="Huang Y."/>
            <person name="Loman N.J."/>
            <person name="Snyder L.A.S."/>
            <person name="Cai J.J."/>
            <person name="Huang J.-D."/>
            <person name="Mak W."/>
            <person name="Pallen M.J."/>
            <person name="Lok S."/>
            <person name="Yuen K.-Y."/>
        </authorList>
    </citation>
    <scope>NUCLEOTIDE SEQUENCE [LARGE SCALE GENOMIC DNA]</scope>
    <source>
        <strain>HLHK9</strain>
    </source>
</reference>
<organism>
    <name type="scientific">Laribacter hongkongensis (strain HLHK9)</name>
    <dbReference type="NCBI Taxonomy" id="557598"/>
    <lineage>
        <taxon>Bacteria</taxon>
        <taxon>Pseudomonadati</taxon>
        <taxon>Pseudomonadota</taxon>
        <taxon>Betaproteobacteria</taxon>
        <taxon>Neisseriales</taxon>
        <taxon>Aquaspirillaceae</taxon>
        <taxon>Laribacter</taxon>
    </lineage>
</organism>
<protein>
    <recommendedName>
        <fullName evidence="1">Glutamate 5-kinase</fullName>
        <ecNumber evidence="1">2.7.2.11</ecNumber>
    </recommendedName>
    <alternativeName>
        <fullName evidence="1">Gamma-glutamyl kinase</fullName>
        <shortName evidence="1">GK</shortName>
    </alternativeName>
</protein>
<keyword id="KW-0028">Amino-acid biosynthesis</keyword>
<keyword id="KW-0067">ATP-binding</keyword>
<keyword id="KW-0963">Cytoplasm</keyword>
<keyword id="KW-0418">Kinase</keyword>
<keyword id="KW-0547">Nucleotide-binding</keyword>
<keyword id="KW-0641">Proline biosynthesis</keyword>
<keyword id="KW-1185">Reference proteome</keyword>
<keyword id="KW-0808">Transferase</keyword>
<sequence length="372" mass="39730">MQSVIHSAHRIVVKVGSSLVTNDGAGLDHAALERWASEIADLMRRGKEVVLVSSGAIAEGIKRLGWSAKPSAVHEKQAAAAVGQMGLCEAYERVFTAHNLKTAQVLLTHEDMADRTRYLNARTTLLTLLSLNVVPIINENDTVVTSEIKLGDNDTLGALVTNLIEADALVILTDQQGLYTADPRKHPDAEFVHEACAGNPELEAMAGGAGSSVGTGGMLTKILAAKRAARSGATTVIACGREANVLSRLADGEAIGTQLVAQNDRWAARKQWLADHLRLAGRLVLDDGAARAVTARHTSLLPIGVIAVEGEFLRGDAVACVNSDGREVARGLANYSSDEARMIMRHPTRDIERLLGYVGEPELIHRDNLVNL</sequence>
<evidence type="ECO:0000255" key="1">
    <source>
        <dbReference type="HAMAP-Rule" id="MF_00456"/>
    </source>
</evidence>
<accession>C1D9T9</accession>
<gene>
    <name evidence="1" type="primary">proB</name>
    <name type="ordered locus">LHK_00056</name>
</gene>
<comment type="function">
    <text evidence="1">Catalyzes the transfer of a phosphate group to glutamate to form L-glutamate 5-phosphate.</text>
</comment>
<comment type="catalytic activity">
    <reaction evidence="1">
        <text>L-glutamate + ATP = L-glutamyl 5-phosphate + ADP</text>
        <dbReference type="Rhea" id="RHEA:14877"/>
        <dbReference type="ChEBI" id="CHEBI:29985"/>
        <dbReference type="ChEBI" id="CHEBI:30616"/>
        <dbReference type="ChEBI" id="CHEBI:58274"/>
        <dbReference type="ChEBI" id="CHEBI:456216"/>
        <dbReference type="EC" id="2.7.2.11"/>
    </reaction>
</comment>
<comment type="pathway">
    <text evidence="1">Amino-acid biosynthesis; L-proline biosynthesis; L-glutamate 5-semialdehyde from L-glutamate: step 1/2.</text>
</comment>
<comment type="subcellular location">
    <subcellularLocation>
        <location evidence="1">Cytoplasm</location>
    </subcellularLocation>
</comment>
<comment type="similarity">
    <text evidence="1">Belongs to the glutamate 5-kinase family.</text>
</comment>
<dbReference type="EC" id="2.7.2.11" evidence="1"/>
<dbReference type="EMBL" id="CP001154">
    <property type="protein sequence ID" value="ACO73052.1"/>
    <property type="molecule type" value="Genomic_DNA"/>
</dbReference>
<dbReference type="RefSeq" id="WP_012695547.1">
    <property type="nucleotide sequence ID" value="NC_012559.1"/>
</dbReference>
<dbReference type="SMR" id="C1D9T9"/>
<dbReference type="STRING" id="557598.LHK_00056"/>
<dbReference type="GeneID" id="75109651"/>
<dbReference type="KEGG" id="lhk:LHK_00056"/>
<dbReference type="eggNOG" id="COG0263">
    <property type="taxonomic scope" value="Bacteria"/>
</dbReference>
<dbReference type="HOGENOM" id="CLU_025400_2_0_4"/>
<dbReference type="UniPathway" id="UPA00098">
    <property type="reaction ID" value="UER00359"/>
</dbReference>
<dbReference type="Proteomes" id="UP000002010">
    <property type="component" value="Chromosome"/>
</dbReference>
<dbReference type="GO" id="GO:0005829">
    <property type="term" value="C:cytosol"/>
    <property type="evidence" value="ECO:0007669"/>
    <property type="project" value="TreeGrafter"/>
</dbReference>
<dbReference type="GO" id="GO:0005524">
    <property type="term" value="F:ATP binding"/>
    <property type="evidence" value="ECO:0007669"/>
    <property type="project" value="UniProtKB-KW"/>
</dbReference>
<dbReference type="GO" id="GO:0004349">
    <property type="term" value="F:glutamate 5-kinase activity"/>
    <property type="evidence" value="ECO:0007669"/>
    <property type="project" value="UniProtKB-UniRule"/>
</dbReference>
<dbReference type="GO" id="GO:0003723">
    <property type="term" value="F:RNA binding"/>
    <property type="evidence" value="ECO:0007669"/>
    <property type="project" value="InterPro"/>
</dbReference>
<dbReference type="GO" id="GO:0055129">
    <property type="term" value="P:L-proline biosynthetic process"/>
    <property type="evidence" value="ECO:0007669"/>
    <property type="project" value="UniProtKB-UniRule"/>
</dbReference>
<dbReference type="CDD" id="cd04242">
    <property type="entry name" value="AAK_G5K_ProB"/>
    <property type="match status" value="1"/>
</dbReference>
<dbReference type="CDD" id="cd21157">
    <property type="entry name" value="PUA_G5K"/>
    <property type="match status" value="1"/>
</dbReference>
<dbReference type="FunFam" id="2.30.130.10:FF:000007">
    <property type="entry name" value="Glutamate 5-kinase"/>
    <property type="match status" value="1"/>
</dbReference>
<dbReference type="FunFam" id="3.40.1160.10:FF:000018">
    <property type="entry name" value="Glutamate 5-kinase"/>
    <property type="match status" value="1"/>
</dbReference>
<dbReference type="Gene3D" id="3.40.1160.10">
    <property type="entry name" value="Acetylglutamate kinase-like"/>
    <property type="match status" value="2"/>
</dbReference>
<dbReference type="Gene3D" id="2.30.130.10">
    <property type="entry name" value="PUA domain"/>
    <property type="match status" value="1"/>
</dbReference>
<dbReference type="HAMAP" id="MF_00456">
    <property type="entry name" value="ProB"/>
    <property type="match status" value="1"/>
</dbReference>
<dbReference type="InterPro" id="IPR036393">
    <property type="entry name" value="AceGlu_kinase-like_sf"/>
</dbReference>
<dbReference type="InterPro" id="IPR001048">
    <property type="entry name" value="Asp/Glu/Uridylate_kinase"/>
</dbReference>
<dbReference type="InterPro" id="IPR041739">
    <property type="entry name" value="G5K_ProB"/>
</dbReference>
<dbReference type="InterPro" id="IPR001057">
    <property type="entry name" value="Glu/AcGlu_kinase"/>
</dbReference>
<dbReference type="InterPro" id="IPR011529">
    <property type="entry name" value="Glu_5kinase"/>
</dbReference>
<dbReference type="InterPro" id="IPR005715">
    <property type="entry name" value="Glu_5kinase/COase_Synthase"/>
</dbReference>
<dbReference type="InterPro" id="IPR019797">
    <property type="entry name" value="Glutamate_5-kinase_CS"/>
</dbReference>
<dbReference type="InterPro" id="IPR002478">
    <property type="entry name" value="PUA"/>
</dbReference>
<dbReference type="InterPro" id="IPR015947">
    <property type="entry name" value="PUA-like_sf"/>
</dbReference>
<dbReference type="InterPro" id="IPR036974">
    <property type="entry name" value="PUA_sf"/>
</dbReference>
<dbReference type="NCBIfam" id="TIGR01027">
    <property type="entry name" value="proB"/>
    <property type="match status" value="1"/>
</dbReference>
<dbReference type="PANTHER" id="PTHR43654">
    <property type="entry name" value="GLUTAMATE 5-KINASE"/>
    <property type="match status" value="1"/>
</dbReference>
<dbReference type="PANTHER" id="PTHR43654:SF1">
    <property type="entry name" value="ISOPENTENYL PHOSPHATE KINASE"/>
    <property type="match status" value="1"/>
</dbReference>
<dbReference type="Pfam" id="PF00696">
    <property type="entry name" value="AA_kinase"/>
    <property type="match status" value="1"/>
</dbReference>
<dbReference type="Pfam" id="PF01472">
    <property type="entry name" value="PUA"/>
    <property type="match status" value="1"/>
</dbReference>
<dbReference type="PIRSF" id="PIRSF000729">
    <property type="entry name" value="GK"/>
    <property type="match status" value="1"/>
</dbReference>
<dbReference type="PRINTS" id="PR00474">
    <property type="entry name" value="GLU5KINASE"/>
</dbReference>
<dbReference type="SMART" id="SM00359">
    <property type="entry name" value="PUA"/>
    <property type="match status" value="1"/>
</dbReference>
<dbReference type="SUPFAM" id="SSF53633">
    <property type="entry name" value="Carbamate kinase-like"/>
    <property type="match status" value="1"/>
</dbReference>
<dbReference type="SUPFAM" id="SSF88697">
    <property type="entry name" value="PUA domain-like"/>
    <property type="match status" value="1"/>
</dbReference>
<dbReference type="PROSITE" id="PS00902">
    <property type="entry name" value="GLUTAMATE_5_KINASE"/>
    <property type="match status" value="1"/>
</dbReference>
<dbReference type="PROSITE" id="PS50890">
    <property type="entry name" value="PUA"/>
    <property type="match status" value="1"/>
</dbReference>